<sequence length="357" mass="38390">MIMAGGTGGHVFPGLAVARSMQANGWRIVWLGTRNGMEAALVPQHGFSIELINFSGLRGKKLSSYLLLPWRLAQACWQSFRILRRQQPQVVLGMGGYPALPGGIMAVLLGKPLLIHEQNRIAGLTNKILAKIADRILLAFPGALTSPENKTRVTGNPVRTEIARLPSPEARYAHRTGNLHILVVGGSLGAQVLNTVLPQALSMIPEDQRPYVTHQSGKAHLDALQQAYADHGVTGNLVAFIENMAAHYQDCDLVICRAGALTISELAAAGVASILIPYPYAVDDHQTANARFLSDYQAAVLWPQSELTAASLAQWLMTCSRAQLQSMATHARALAMPEAAQTVAEACQQLSGQTNEA</sequence>
<protein>
    <recommendedName>
        <fullName evidence="1">UDP-N-acetylglucosamine--N-acetylmuramyl-(pentapeptide) pyrophosphoryl-undecaprenol N-acetylglucosamine transferase</fullName>
        <ecNumber evidence="1">2.4.1.227</ecNumber>
    </recommendedName>
    <alternativeName>
        <fullName evidence="1">Undecaprenyl-PP-MurNAc-pentapeptide-UDPGlcNAc GlcNAc transferase</fullName>
    </alternativeName>
</protein>
<dbReference type="EC" id="2.4.1.227" evidence="1"/>
<dbReference type="EMBL" id="AL954747">
    <property type="protein sequence ID" value="CAD84902.1"/>
    <property type="molecule type" value="Genomic_DNA"/>
</dbReference>
<dbReference type="RefSeq" id="WP_011111600.1">
    <property type="nucleotide sequence ID" value="NC_004757.1"/>
</dbReference>
<dbReference type="SMR" id="Q82VS3"/>
<dbReference type="STRING" id="228410.NE0991"/>
<dbReference type="CAZy" id="GT28">
    <property type="family name" value="Glycosyltransferase Family 28"/>
</dbReference>
<dbReference type="GeneID" id="87104182"/>
<dbReference type="KEGG" id="neu:NE0991"/>
<dbReference type="eggNOG" id="COG0707">
    <property type="taxonomic scope" value="Bacteria"/>
</dbReference>
<dbReference type="HOGENOM" id="CLU_037404_2_0_4"/>
<dbReference type="OrthoDB" id="9808936at2"/>
<dbReference type="PhylomeDB" id="Q82VS3"/>
<dbReference type="UniPathway" id="UPA00219"/>
<dbReference type="Proteomes" id="UP000001416">
    <property type="component" value="Chromosome"/>
</dbReference>
<dbReference type="GO" id="GO:0005886">
    <property type="term" value="C:plasma membrane"/>
    <property type="evidence" value="ECO:0007669"/>
    <property type="project" value="UniProtKB-SubCell"/>
</dbReference>
<dbReference type="GO" id="GO:0051991">
    <property type="term" value="F:UDP-N-acetyl-D-glucosamine:N-acetylmuramoyl-L-alanyl-D-glutamyl-meso-2,6-diaminopimelyl-D-alanyl-D-alanine-diphosphoundecaprenol 4-beta-N-acetylglucosaminlytransferase activity"/>
    <property type="evidence" value="ECO:0007669"/>
    <property type="project" value="RHEA"/>
</dbReference>
<dbReference type="GO" id="GO:0050511">
    <property type="term" value="F:undecaprenyldiphospho-muramoylpentapeptide beta-N-acetylglucosaminyltransferase activity"/>
    <property type="evidence" value="ECO:0007669"/>
    <property type="project" value="UniProtKB-UniRule"/>
</dbReference>
<dbReference type="GO" id="GO:0005975">
    <property type="term" value="P:carbohydrate metabolic process"/>
    <property type="evidence" value="ECO:0007669"/>
    <property type="project" value="InterPro"/>
</dbReference>
<dbReference type="GO" id="GO:0051301">
    <property type="term" value="P:cell division"/>
    <property type="evidence" value="ECO:0007669"/>
    <property type="project" value="UniProtKB-KW"/>
</dbReference>
<dbReference type="GO" id="GO:0071555">
    <property type="term" value="P:cell wall organization"/>
    <property type="evidence" value="ECO:0007669"/>
    <property type="project" value="UniProtKB-KW"/>
</dbReference>
<dbReference type="GO" id="GO:0030259">
    <property type="term" value="P:lipid glycosylation"/>
    <property type="evidence" value="ECO:0007669"/>
    <property type="project" value="UniProtKB-UniRule"/>
</dbReference>
<dbReference type="GO" id="GO:0009252">
    <property type="term" value="P:peptidoglycan biosynthetic process"/>
    <property type="evidence" value="ECO:0007669"/>
    <property type="project" value="UniProtKB-UniRule"/>
</dbReference>
<dbReference type="GO" id="GO:0008360">
    <property type="term" value="P:regulation of cell shape"/>
    <property type="evidence" value="ECO:0007669"/>
    <property type="project" value="UniProtKB-KW"/>
</dbReference>
<dbReference type="CDD" id="cd03785">
    <property type="entry name" value="GT28_MurG"/>
    <property type="match status" value="1"/>
</dbReference>
<dbReference type="Gene3D" id="3.40.50.2000">
    <property type="entry name" value="Glycogen Phosphorylase B"/>
    <property type="match status" value="2"/>
</dbReference>
<dbReference type="HAMAP" id="MF_00033">
    <property type="entry name" value="MurG"/>
    <property type="match status" value="1"/>
</dbReference>
<dbReference type="InterPro" id="IPR006009">
    <property type="entry name" value="GlcNAc_MurG"/>
</dbReference>
<dbReference type="InterPro" id="IPR007235">
    <property type="entry name" value="Glyco_trans_28_C"/>
</dbReference>
<dbReference type="InterPro" id="IPR004276">
    <property type="entry name" value="GlycoTrans_28_N"/>
</dbReference>
<dbReference type="NCBIfam" id="TIGR01133">
    <property type="entry name" value="murG"/>
    <property type="match status" value="1"/>
</dbReference>
<dbReference type="PANTHER" id="PTHR21015:SF22">
    <property type="entry name" value="GLYCOSYLTRANSFERASE"/>
    <property type="match status" value="1"/>
</dbReference>
<dbReference type="PANTHER" id="PTHR21015">
    <property type="entry name" value="UDP-N-ACETYLGLUCOSAMINE--N-ACETYLMURAMYL-(PENTAPEPTIDE) PYROPHOSPHORYL-UNDECAPRENOL N-ACETYLGLUCOSAMINE TRANSFERASE 1"/>
    <property type="match status" value="1"/>
</dbReference>
<dbReference type="Pfam" id="PF04101">
    <property type="entry name" value="Glyco_tran_28_C"/>
    <property type="match status" value="1"/>
</dbReference>
<dbReference type="Pfam" id="PF03033">
    <property type="entry name" value="Glyco_transf_28"/>
    <property type="match status" value="1"/>
</dbReference>
<dbReference type="SUPFAM" id="SSF53756">
    <property type="entry name" value="UDP-Glycosyltransferase/glycogen phosphorylase"/>
    <property type="match status" value="1"/>
</dbReference>
<keyword id="KW-0131">Cell cycle</keyword>
<keyword id="KW-0132">Cell division</keyword>
<keyword id="KW-0997">Cell inner membrane</keyword>
<keyword id="KW-1003">Cell membrane</keyword>
<keyword id="KW-0133">Cell shape</keyword>
<keyword id="KW-0961">Cell wall biogenesis/degradation</keyword>
<keyword id="KW-0328">Glycosyltransferase</keyword>
<keyword id="KW-0472">Membrane</keyword>
<keyword id="KW-0573">Peptidoglycan synthesis</keyword>
<keyword id="KW-1185">Reference proteome</keyword>
<keyword id="KW-0808">Transferase</keyword>
<accession>Q82VS3</accession>
<organism>
    <name type="scientific">Nitrosomonas europaea (strain ATCC 19718 / CIP 103999 / KCTC 2705 / NBRC 14298)</name>
    <dbReference type="NCBI Taxonomy" id="228410"/>
    <lineage>
        <taxon>Bacteria</taxon>
        <taxon>Pseudomonadati</taxon>
        <taxon>Pseudomonadota</taxon>
        <taxon>Betaproteobacteria</taxon>
        <taxon>Nitrosomonadales</taxon>
        <taxon>Nitrosomonadaceae</taxon>
        <taxon>Nitrosomonas</taxon>
    </lineage>
</organism>
<proteinExistence type="inferred from homology"/>
<name>MURG_NITEU</name>
<evidence type="ECO:0000255" key="1">
    <source>
        <dbReference type="HAMAP-Rule" id="MF_00033"/>
    </source>
</evidence>
<gene>
    <name evidence="1" type="primary">murG</name>
    <name type="ordered locus">NE0991</name>
</gene>
<reference key="1">
    <citation type="journal article" date="2003" name="J. Bacteriol.">
        <title>Complete genome sequence of the ammonia-oxidizing bacterium and obligate chemolithoautotroph Nitrosomonas europaea.</title>
        <authorList>
            <person name="Chain P."/>
            <person name="Lamerdin J.E."/>
            <person name="Larimer F.W."/>
            <person name="Regala W."/>
            <person name="Lao V."/>
            <person name="Land M.L."/>
            <person name="Hauser L."/>
            <person name="Hooper A.B."/>
            <person name="Klotz M.G."/>
            <person name="Norton J."/>
            <person name="Sayavedra-Soto L.A."/>
            <person name="Arciero D.M."/>
            <person name="Hommes N.G."/>
            <person name="Whittaker M.M."/>
            <person name="Arp D.J."/>
        </authorList>
    </citation>
    <scope>NUCLEOTIDE SEQUENCE [LARGE SCALE GENOMIC DNA]</scope>
    <source>
        <strain>ATCC 19718 / CIP 103999 / KCTC 2705 / NBRC 14298</strain>
    </source>
</reference>
<comment type="function">
    <text evidence="1">Cell wall formation. Catalyzes the transfer of a GlcNAc subunit on undecaprenyl-pyrophosphoryl-MurNAc-pentapeptide (lipid intermediate I) to form undecaprenyl-pyrophosphoryl-MurNAc-(pentapeptide)GlcNAc (lipid intermediate II).</text>
</comment>
<comment type="catalytic activity">
    <reaction evidence="1">
        <text>di-trans,octa-cis-undecaprenyl diphospho-N-acetyl-alpha-D-muramoyl-L-alanyl-D-glutamyl-meso-2,6-diaminopimeloyl-D-alanyl-D-alanine + UDP-N-acetyl-alpha-D-glucosamine = di-trans,octa-cis-undecaprenyl diphospho-[N-acetyl-alpha-D-glucosaminyl-(1-&gt;4)]-N-acetyl-alpha-D-muramoyl-L-alanyl-D-glutamyl-meso-2,6-diaminopimeloyl-D-alanyl-D-alanine + UDP + H(+)</text>
        <dbReference type="Rhea" id="RHEA:31227"/>
        <dbReference type="ChEBI" id="CHEBI:15378"/>
        <dbReference type="ChEBI" id="CHEBI:57705"/>
        <dbReference type="ChEBI" id="CHEBI:58223"/>
        <dbReference type="ChEBI" id="CHEBI:61387"/>
        <dbReference type="ChEBI" id="CHEBI:61388"/>
        <dbReference type="EC" id="2.4.1.227"/>
    </reaction>
</comment>
<comment type="pathway">
    <text evidence="1">Cell wall biogenesis; peptidoglycan biosynthesis.</text>
</comment>
<comment type="subcellular location">
    <subcellularLocation>
        <location evidence="1">Cell inner membrane</location>
        <topology evidence="1">Peripheral membrane protein</topology>
        <orientation evidence="1">Cytoplasmic side</orientation>
    </subcellularLocation>
</comment>
<comment type="similarity">
    <text evidence="1">Belongs to the glycosyltransferase 28 family. MurG subfamily.</text>
</comment>
<feature type="chain" id="PRO_0000109192" description="UDP-N-acetylglucosamine--N-acetylmuramyl-(pentapeptide) pyrophosphoryl-undecaprenol N-acetylglucosamine transferase">
    <location>
        <begin position="1"/>
        <end position="357"/>
    </location>
</feature>
<feature type="binding site" evidence="1">
    <location>
        <begin position="7"/>
        <end position="9"/>
    </location>
    <ligand>
        <name>UDP-N-acetyl-alpha-D-glucosamine</name>
        <dbReference type="ChEBI" id="CHEBI:57705"/>
    </ligand>
</feature>
<feature type="binding site" evidence="1">
    <location>
        <position position="119"/>
    </location>
    <ligand>
        <name>UDP-N-acetyl-alpha-D-glucosamine</name>
        <dbReference type="ChEBI" id="CHEBI:57705"/>
    </ligand>
</feature>
<feature type="binding site" evidence="1">
    <location>
        <position position="159"/>
    </location>
    <ligand>
        <name>UDP-N-acetyl-alpha-D-glucosamine</name>
        <dbReference type="ChEBI" id="CHEBI:57705"/>
    </ligand>
</feature>
<feature type="binding site" evidence="1">
    <location>
        <position position="187"/>
    </location>
    <ligand>
        <name>UDP-N-acetyl-alpha-D-glucosamine</name>
        <dbReference type="ChEBI" id="CHEBI:57705"/>
    </ligand>
</feature>
<feature type="binding site" evidence="1">
    <location>
        <position position="241"/>
    </location>
    <ligand>
        <name>UDP-N-acetyl-alpha-D-glucosamine</name>
        <dbReference type="ChEBI" id="CHEBI:57705"/>
    </ligand>
</feature>
<feature type="binding site" evidence="1">
    <location>
        <position position="286"/>
    </location>
    <ligand>
        <name>UDP-N-acetyl-alpha-D-glucosamine</name>
        <dbReference type="ChEBI" id="CHEBI:57705"/>
    </ligand>
</feature>